<reference key="1">
    <citation type="journal article" date="2000" name="Nature">
        <title>Sequence and analysis of chromosome 1 of the plant Arabidopsis thaliana.</title>
        <authorList>
            <person name="Theologis A."/>
            <person name="Ecker J.R."/>
            <person name="Palm C.J."/>
            <person name="Federspiel N.A."/>
            <person name="Kaul S."/>
            <person name="White O."/>
            <person name="Alonso J."/>
            <person name="Altafi H."/>
            <person name="Araujo R."/>
            <person name="Bowman C.L."/>
            <person name="Brooks S.Y."/>
            <person name="Buehler E."/>
            <person name="Chan A."/>
            <person name="Chao Q."/>
            <person name="Chen H."/>
            <person name="Cheuk R.F."/>
            <person name="Chin C.W."/>
            <person name="Chung M.K."/>
            <person name="Conn L."/>
            <person name="Conway A.B."/>
            <person name="Conway A.R."/>
            <person name="Creasy T.H."/>
            <person name="Dewar K."/>
            <person name="Dunn P."/>
            <person name="Etgu P."/>
            <person name="Feldblyum T.V."/>
            <person name="Feng J.-D."/>
            <person name="Fong B."/>
            <person name="Fujii C.Y."/>
            <person name="Gill J.E."/>
            <person name="Goldsmith A.D."/>
            <person name="Haas B."/>
            <person name="Hansen N.F."/>
            <person name="Hughes B."/>
            <person name="Huizar L."/>
            <person name="Hunter J.L."/>
            <person name="Jenkins J."/>
            <person name="Johnson-Hopson C."/>
            <person name="Khan S."/>
            <person name="Khaykin E."/>
            <person name="Kim C.J."/>
            <person name="Koo H.L."/>
            <person name="Kremenetskaia I."/>
            <person name="Kurtz D.B."/>
            <person name="Kwan A."/>
            <person name="Lam B."/>
            <person name="Langin-Hooper S."/>
            <person name="Lee A."/>
            <person name="Lee J.M."/>
            <person name="Lenz C.A."/>
            <person name="Li J.H."/>
            <person name="Li Y.-P."/>
            <person name="Lin X."/>
            <person name="Liu S.X."/>
            <person name="Liu Z.A."/>
            <person name="Luros J.S."/>
            <person name="Maiti R."/>
            <person name="Marziali A."/>
            <person name="Militscher J."/>
            <person name="Miranda M."/>
            <person name="Nguyen M."/>
            <person name="Nierman W.C."/>
            <person name="Osborne B.I."/>
            <person name="Pai G."/>
            <person name="Peterson J."/>
            <person name="Pham P.K."/>
            <person name="Rizzo M."/>
            <person name="Rooney T."/>
            <person name="Rowley D."/>
            <person name="Sakano H."/>
            <person name="Salzberg S.L."/>
            <person name="Schwartz J.R."/>
            <person name="Shinn P."/>
            <person name="Southwick A.M."/>
            <person name="Sun H."/>
            <person name="Tallon L.J."/>
            <person name="Tambunga G."/>
            <person name="Toriumi M.J."/>
            <person name="Town C.D."/>
            <person name="Utterback T."/>
            <person name="Van Aken S."/>
            <person name="Vaysberg M."/>
            <person name="Vysotskaia V.S."/>
            <person name="Walker M."/>
            <person name="Wu D."/>
            <person name="Yu G."/>
            <person name="Fraser C.M."/>
            <person name="Venter J.C."/>
            <person name="Davis R.W."/>
        </authorList>
    </citation>
    <scope>NUCLEOTIDE SEQUENCE [LARGE SCALE GENOMIC DNA]</scope>
    <source>
        <strain>cv. Columbia</strain>
    </source>
</reference>
<reference key="2">
    <citation type="journal article" date="2017" name="Plant J.">
        <title>Araport11: a complete reannotation of the Arabidopsis thaliana reference genome.</title>
        <authorList>
            <person name="Cheng C.Y."/>
            <person name="Krishnakumar V."/>
            <person name="Chan A.P."/>
            <person name="Thibaud-Nissen F."/>
            <person name="Schobel S."/>
            <person name="Town C.D."/>
        </authorList>
    </citation>
    <scope>GENOME REANNOTATION</scope>
    <source>
        <strain>cv. Columbia</strain>
    </source>
</reference>
<reference key="3">
    <citation type="journal article" date="2003" name="Science">
        <title>Empirical analysis of transcriptional activity in the Arabidopsis genome.</title>
        <authorList>
            <person name="Yamada K."/>
            <person name="Lim J."/>
            <person name="Dale J.M."/>
            <person name="Chen H."/>
            <person name="Shinn P."/>
            <person name="Palm C.J."/>
            <person name="Southwick A.M."/>
            <person name="Wu H.C."/>
            <person name="Kim C.J."/>
            <person name="Nguyen M."/>
            <person name="Pham P.K."/>
            <person name="Cheuk R.F."/>
            <person name="Karlin-Newmann G."/>
            <person name="Liu S.X."/>
            <person name="Lam B."/>
            <person name="Sakano H."/>
            <person name="Wu T."/>
            <person name="Yu G."/>
            <person name="Miranda M."/>
            <person name="Quach H.L."/>
            <person name="Tripp M."/>
            <person name="Chang C.H."/>
            <person name="Lee J.M."/>
            <person name="Toriumi M.J."/>
            <person name="Chan M.M."/>
            <person name="Tang C.C."/>
            <person name="Onodera C.S."/>
            <person name="Deng J.M."/>
            <person name="Akiyama K."/>
            <person name="Ansari Y."/>
            <person name="Arakawa T."/>
            <person name="Banh J."/>
            <person name="Banno F."/>
            <person name="Bowser L."/>
            <person name="Brooks S.Y."/>
            <person name="Carninci P."/>
            <person name="Chao Q."/>
            <person name="Choy N."/>
            <person name="Enju A."/>
            <person name="Goldsmith A.D."/>
            <person name="Gurjal M."/>
            <person name="Hansen N.F."/>
            <person name="Hayashizaki Y."/>
            <person name="Johnson-Hopson C."/>
            <person name="Hsuan V.W."/>
            <person name="Iida K."/>
            <person name="Karnes M."/>
            <person name="Khan S."/>
            <person name="Koesema E."/>
            <person name="Ishida J."/>
            <person name="Jiang P.X."/>
            <person name="Jones T."/>
            <person name="Kawai J."/>
            <person name="Kamiya A."/>
            <person name="Meyers C."/>
            <person name="Nakajima M."/>
            <person name="Narusaka M."/>
            <person name="Seki M."/>
            <person name="Sakurai T."/>
            <person name="Satou M."/>
            <person name="Tamse R."/>
            <person name="Vaysberg M."/>
            <person name="Wallender E.K."/>
            <person name="Wong C."/>
            <person name="Yamamura Y."/>
            <person name="Yuan S."/>
            <person name="Shinozaki K."/>
            <person name="Davis R.W."/>
            <person name="Theologis A."/>
            <person name="Ecker J.R."/>
        </authorList>
    </citation>
    <scope>NUCLEOTIDE SEQUENCE [LARGE SCALE MRNA]</scope>
    <source>
        <strain>cv. Columbia</strain>
    </source>
</reference>
<reference key="4">
    <citation type="submission" date="2004-09" db="EMBL/GenBank/DDBJ databases">
        <title>Large-scale analysis of RIKEN Arabidopsis full-length (RAFL) cDNAs.</title>
        <authorList>
            <person name="Totoki Y."/>
            <person name="Seki M."/>
            <person name="Ishida J."/>
            <person name="Nakajima M."/>
            <person name="Enju A."/>
            <person name="Kamiya A."/>
            <person name="Narusaka M."/>
            <person name="Shin-i T."/>
            <person name="Nakagawa M."/>
            <person name="Sakamoto N."/>
            <person name="Oishi K."/>
            <person name="Kohara Y."/>
            <person name="Kobayashi M."/>
            <person name="Toyoda A."/>
            <person name="Sakaki Y."/>
            <person name="Sakurai T."/>
            <person name="Iida K."/>
            <person name="Akiyama K."/>
            <person name="Satou M."/>
            <person name="Toyoda T."/>
            <person name="Konagaya A."/>
            <person name="Carninci P."/>
            <person name="Kawai J."/>
            <person name="Hayashizaki Y."/>
            <person name="Shinozaki K."/>
        </authorList>
    </citation>
    <scope>NUCLEOTIDE SEQUENCE [LARGE SCALE MRNA]</scope>
    <source>
        <strain>cv. Columbia</strain>
    </source>
</reference>
<reference key="5">
    <citation type="journal article" date="2002" name="Trends Plant Sci.">
        <title>A simple nomenclature for a complex proton pump: VHA genes encode the vacuolar H(+)-ATPase.</title>
        <authorList>
            <person name="Sze H."/>
            <person name="Schumacher K."/>
            <person name="Mueller M.L."/>
            <person name="Padmanaban S."/>
            <person name="Taiz L."/>
        </authorList>
    </citation>
    <scope>GENE FAMILY</scope>
    <scope>NOMENCLATURE</scope>
</reference>
<organism>
    <name type="scientific">Arabidopsis thaliana</name>
    <name type="common">Mouse-ear cress</name>
    <dbReference type="NCBI Taxonomy" id="3702"/>
    <lineage>
        <taxon>Eukaryota</taxon>
        <taxon>Viridiplantae</taxon>
        <taxon>Streptophyta</taxon>
        <taxon>Embryophyta</taxon>
        <taxon>Tracheophyta</taxon>
        <taxon>Spermatophyta</taxon>
        <taxon>Magnoliopsida</taxon>
        <taxon>eudicotyledons</taxon>
        <taxon>Gunneridae</taxon>
        <taxon>Pentapetalae</taxon>
        <taxon>rosids</taxon>
        <taxon>malvids</taxon>
        <taxon>Brassicales</taxon>
        <taxon>Brassicaceae</taxon>
        <taxon>Camelineae</taxon>
        <taxon>Arabidopsis</taxon>
    </lineage>
</organism>
<evidence type="ECO:0000305" key="1"/>
<sequence length="487" mass="54312">MVETSIDMEEGTLEIGMEYRTVSGVAGPLVILDKVKGPKYQEIVNIRLGDGSTRRGQVLEVDGEKAVVQVFEGTSGIDNKFTTVQFTGEVLKTPVSLDMLGRIFNGSGKPIDNGPPILPEAYLDISGSSINPSERTYPEEMIQTGISTIDVMNSIARGQKIPLFSAAGLPHNEIAAQICRQAGLVKRLEKTENLIQEDHGEDNFAIVFAAMGVNMETAQFFKRDFEENGSMERVTLFLNLANDPTIERIITPRIALTTAEYLAYECGKHVLVILTDMSSYADALREVSAAREEVPGRRGYPGYMYTDLATIYERAGRIEGRKGSITQIPILTMPNDDITHPTPDLTGYITEGQIYIDRQLHNRQIYPPINVLPSLSRLMKSAIGEGMTRKDHSDVSNQLYANYAIGKDVQAMKAVVGEEALSSEDLLYLEFLDKFERKFVMQGAYDTRNIFQSLDLAWTLLRIFPRELLHRIPAKTLDQFYSRDSTS</sequence>
<keyword id="KW-0375">Hydrogen ion transport</keyword>
<keyword id="KW-0406">Ion transport</keyword>
<keyword id="KW-0472">Membrane</keyword>
<keyword id="KW-1185">Reference proteome</keyword>
<keyword id="KW-0813">Transport</keyword>
<keyword id="KW-0926">Vacuole</keyword>
<comment type="function">
    <text>Non-catalytic subunit of the peripheral V1 complex of vacuolar ATPase. V-ATPase is responsible for acidifying a variety of intracellular compartments in eukaryotic cells.</text>
</comment>
<comment type="subunit">
    <text>V-ATPase is a heteromultimeric enzyme composed of a peripheral catalytic V1 complex (components A to H) attached to an integral membrane V0 proton pore complex (components: a, c, c'', d and e).</text>
</comment>
<comment type="subcellular location">
    <subcellularLocation>
        <location evidence="1">Vacuole membrane</location>
        <topology evidence="1">Peripheral membrane protein</topology>
    </subcellularLocation>
</comment>
<comment type="similarity">
    <text evidence="1">Belongs to the ATPase alpha/beta chains family.</text>
</comment>
<comment type="sequence caution" evidence="1">
    <conflict type="erroneous gene model prediction">
        <sequence resource="EMBL-CDS" id="AAF88162"/>
    </conflict>
</comment>
<comment type="sequence caution" evidence="1">
    <conflict type="frameshift">
        <sequence resource="EMBL-CDS" id="AAF88162"/>
    </conflict>
</comment>
<gene>
    <name type="primary">VHA-B3</name>
    <name type="ordered locus">At1g20260</name>
    <name type="ORF">F14O10.13</name>
</gene>
<proteinExistence type="evidence at transcript level"/>
<name>VATB3_ARATH</name>
<dbReference type="EMBL" id="AC026234">
    <property type="protein sequence ID" value="AAF88162.1"/>
    <property type="status" value="ALT_SEQ"/>
    <property type="molecule type" value="Genomic_DNA"/>
</dbReference>
<dbReference type="EMBL" id="CP002684">
    <property type="protein sequence ID" value="AEE29955.1"/>
    <property type="molecule type" value="Genomic_DNA"/>
</dbReference>
<dbReference type="EMBL" id="AY062616">
    <property type="protein sequence ID" value="AAL32694.1"/>
    <property type="molecule type" value="mRNA"/>
</dbReference>
<dbReference type="EMBL" id="BT000150">
    <property type="protein sequence ID" value="AAN15469.1"/>
    <property type="molecule type" value="mRNA"/>
</dbReference>
<dbReference type="EMBL" id="AK176408">
    <property type="protein sequence ID" value="BAD44171.1"/>
    <property type="molecule type" value="mRNA"/>
</dbReference>
<dbReference type="EMBL" id="AK176641">
    <property type="protein sequence ID" value="BAD44404.1"/>
    <property type="molecule type" value="mRNA"/>
</dbReference>
<dbReference type="EMBL" id="AK176750">
    <property type="protein sequence ID" value="BAD44513.1"/>
    <property type="molecule type" value="mRNA"/>
</dbReference>
<dbReference type="EMBL" id="AK176915">
    <property type="protein sequence ID" value="BAD44678.1"/>
    <property type="molecule type" value="mRNA"/>
</dbReference>
<dbReference type="PIR" id="C86336">
    <property type="entry name" value="C86336"/>
</dbReference>
<dbReference type="RefSeq" id="NP_173451.5">
    <property type="nucleotide sequence ID" value="NM_101877.6"/>
</dbReference>
<dbReference type="SMR" id="Q8W4E2"/>
<dbReference type="BioGRID" id="23853">
    <property type="interactions" value="11"/>
</dbReference>
<dbReference type="FunCoup" id="Q8W4E2">
    <property type="interactions" value="2419"/>
</dbReference>
<dbReference type="IntAct" id="Q8W4E2">
    <property type="interactions" value="1"/>
</dbReference>
<dbReference type="STRING" id="3702.Q8W4E2"/>
<dbReference type="TCDB" id="3.A.2.2.5">
    <property type="family name" value="the h+- or na+-translocating f-type, v-type and a-type atpase (f-atpase) superfamily"/>
</dbReference>
<dbReference type="iPTMnet" id="Q8W4E2"/>
<dbReference type="MetOSite" id="Q8W4E2"/>
<dbReference type="PaxDb" id="3702-AT1G20260.1"/>
<dbReference type="ProteomicsDB" id="228576"/>
<dbReference type="EnsemblPlants" id="AT1G20260.1">
    <property type="protein sequence ID" value="AT1G20260.1"/>
    <property type="gene ID" value="AT1G20260"/>
</dbReference>
<dbReference type="GeneID" id="838614"/>
<dbReference type="Gramene" id="AT1G20260.1">
    <property type="protein sequence ID" value="AT1G20260.1"/>
    <property type="gene ID" value="AT1G20260"/>
</dbReference>
<dbReference type="KEGG" id="ath:AT1G20260"/>
<dbReference type="Araport" id="AT1G20260"/>
<dbReference type="TAIR" id="AT1G20260">
    <property type="gene designation" value="VAB3"/>
</dbReference>
<dbReference type="eggNOG" id="KOG1351">
    <property type="taxonomic scope" value="Eukaryota"/>
</dbReference>
<dbReference type="HOGENOM" id="CLU_022916_3_0_1"/>
<dbReference type="InParanoid" id="Q8W4E2"/>
<dbReference type="OMA" id="HGQIMNT"/>
<dbReference type="OrthoDB" id="1029686at2759"/>
<dbReference type="PhylomeDB" id="Q8W4E2"/>
<dbReference type="BioCyc" id="ARA:AT1G20260-MONOMER"/>
<dbReference type="CD-CODE" id="4299E36E">
    <property type="entry name" value="Nucleolus"/>
</dbReference>
<dbReference type="PRO" id="PR:Q8W4E2"/>
<dbReference type="Proteomes" id="UP000006548">
    <property type="component" value="Chromosome 1"/>
</dbReference>
<dbReference type="ExpressionAtlas" id="Q8W4E2">
    <property type="expression patterns" value="baseline and differential"/>
</dbReference>
<dbReference type="GO" id="GO:0005829">
    <property type="term" value="C:cytosol"/>
    <property type="evidence" value="ECO:0007005"/>
    <property type="project" value="TAIR"/>
</dbReference>
<dbReference type="GO" id="GO:0005794">
    <property type="term" value="C:Golgi apparatus"/>
    <property type="evidence" value="ECO:0007005"/>
    <property type="project" value="TAIR"/>
</dbReference>
<dbReference type="GO" id="GO:0005634">
    <property type="term" value="C:nucleus"/>
    <property type="evidence" value="ECO:0007005"/>
    <property type="project" value="TAIR"/>
</dbReference>
<dbReference type="GO" id="GO:0000325">
    <property type="term" value="C:plant-type vacuole"/>
    <property type="evidence" value="ECO:0007005"/>
    <property type="project" value="TAIR"/>
</dbReference>
<dbReference type="GO" id="GO:0033180">
    <property type="term" value="C:proton-transporting V-type ATPase, V1 domain"/>
    <property type="evidence" value="ECO:0007669"/>
    <property type="project" value="InterPro"/>
</dbReference>
<dbReference type="GO" id="GO:0005774">
    <property type="term" value="C:vacuolar membrane"/>
    <property type="evidence" value="ECO:0007669"/>
    <property type="project" value="UniProtKB-SubCell"/>
</dbReference>
<dbReference type="GO" id="GO:0005773">
    <property type="term" value="C:vacuole"/>
    <property type="evidence" value="ECO:0007005"/>
    <property type="project" value="TAIR"/>
</dbReference>
<dbReference type="GO" id="GO:0051015">
    <property type="term" value="F:actin filament binding"/>
    <property type="evidence" value="ECO:0000314"/>
    <property type="project" value="TAIR"/>
</dbReference>
<dbReference type="GO" id="GO:0005524">
    <property type="term" value="F:ATP binding"/>
    <property type="evidence" value="ECO:0007669"/>
    <property type="project" value="InterPro"/>
</dbReference>
<dbReference type="GO" id="GO:0046961">
    <property type="term" value="F:proton-transporting ATPase activity, rotational mechanism"/>
    <property type="evidence" value="ECO:0007669"/>
    <property type="project" value="InterPro"/>
</dbReference>
<dbReference type="GO" id="GO:0051017">
    <property type="term" value="P:actin filament bundle assembly"/>
    <property type="evidence" value="ECO:0000314"/>
    <property type="project" value="TAIR"/>
</dbReference>
<dbReference type="GO" id="GO:0051693">
    <property type="term" value="P:actin filament capping"/>
    <property type="evidence" value="ECO:0000314"/>
    <property type="project" value="TAIR"/>
</dbReference>
<dbReference type="GO" id="GO:0046034">
    <property type="term" value="P:ATP metabolic process"/>
    <property type="evidence" value="ECO:0007669"/>
    <property type="project" value="InterPro"/>
</dbReference>
<dbReference type="GO" id="GO:0030835">
    <property type="term" value="P:negative regulation of actin filament depolymerization"/>
    <property type="evidence" value="ECO:0000314"/>
    <property type="project" value="TAIR"/>
</dbReference>
<dbReference type="CDD" id="cd18112">
    <property type="entry name" value="ATP-synt_V_A-type_beta_C"/>
    <property type="match status" value="1"/>
</dbReference>
<dbReference type="CDD" id="cd18118">
    <property type="entry name" value="ATP-synt_V_A-type_beta_N"/>
    <property type="match status" value="1"/>
</dbReference>
<dbReference type="CDD" id="cd01135">
    <property type="entry name" value="V_A-ATPase_B"/>
    <property type="match status" value="1"/>
</dbReference>
<dbReference type="FunFam" id="3.40.50.12240:FF:000001">
    <property type="entry name" value="V-type proton ATPase subunit B, brain"/>
    <property type="match status" value="1"/>
</dbReference>
<dbReference type="Gene3D" id="3.40.50.12240">
    <property type="match status" value="1"/>
</dbReference>
<dbReference type="HAMAP" id="MF_00310">
    <property type="entry name" value="ATP_synth_B_arch"/>
    <property type="match status" value="1"/>
</dbReference>
<dbReference type="InterPro" id="IPR055190">
    <property type="entry name" value="ATP-synt_VA_C"/>
</dbReference>
<dbReference type="InterPro" id="IPR020003">
    <property type="entry name" value="ATPase_a/bsu_AS"/>
</dbReference>
<dbReference type="InterPro" id="IPR004100">
    <property type="entry name" value="ATPase_F1/V1/A1_a/bsu_N"/>
</dbReference>
<dbReference type="InterPro" id="IPR000194">
    <property type="entry name" value="ATPase_F1/V1/A1_a/bsu_nucl-bd"/>
</dbReference>
<dbReference type="InterPro" id="IPR005723">
    <property type="entry name" value="ATPase_V1-cplx_bsu"/>
</dbReference>
<dbReference type="InterPro" id="IPR027417">
    <property type="entry name" value="P-loop_NTPase"/>
</dbReference>
<dbReference type="InterPro" id="IPR022879">
    <property type="entry name" value="V-ATPase_su_B/beta"/>
</dbReference>
<dbReference type="NCBIfam" id="NF003235">
    <property type="entry name" value="PRK04196.1"/>
    <property type="match status" value="1"/>
</dbReference>
<dbReference type="NCBIfam" id="TIGR01040">
    <property type="entry name" value="V-ATPase_V1_B"/>
    <property type="match status" value="1"/>
</dbReference>
<dbReference type="PANTHER" id="PTHR43389">
    <property type="entry name" value="V-TYPE PROTON ATPASE SUBUNIT B"/>
    <property type="match status" value="1"/>
</dbReference>
<dbReference type="PANTHER" id="PTHR43389:SF27">
    <property type="entry name" value="V-TYPE PROTON ATPASE SUBUNIT B1-RELATED"/>
    <property type="match status" value="1"/>
</dbReference>
<dbReference type="Pfam" id="PF00006">
    <property type="entry name" value="ATP-synt_ab"/>
    <property type="match status" value="1"/>
</dbReference>
<dbReference type="Pfam" id="PF02874">
    <property type="entry name" value="ATP-synt_ab_N"/>
    <property type="match status" value="1"/>
</dbReference>
<dbReference type="Pfam" id="PF22919">
    <property type="entry name" value="ATP-synt_VA_C"/>
    <property type="match status" value="1"/>
</dbReference>
<dbReference type="PIRSF" id="PIRSF039114">
    <property type="entry name" value="V-ATPsynth_beta/V-ATPase_B"/>
    <property type="match status" value="1"/>
</dbReference>
<dbReference type="SUPFAM" id="SSF52540">
    <property type="entry name" value="P-loop containing nucleoside triphosphate hydrolases"/>
    <property type="match status" value="1"/>
</dbReference>
<dbReference type="PROSITE" id="PS00152">
    <property type="entry name" value="ATPASE_ALPHA_BETA"/>
    <property type="match status" value="1"/>
</dbReference>
<accession>Q8W4E2</accession>
<accession>Q9LN19</accession>
<feature type="chain" id="PRO_0000373817" description="V-type proton ATPase subunit B3">
    <location>
        <begin position="1"/>
        <end position="487"/>
    </location>
</feature>
<protein>
    <recommendedName>
        <fullName>V-type proton ATPase subunit B3</fullName>
        <shortName>V-ATPase subunit B3</shortName>
    </recommendedName>
    <alternativeName>
        <fullName>Vacuolar H(+)-ATPase subunit B isoform 3</fullName>
    </alternativeName>
    <alternativeName>
        <fullName>Vacuolar proton pump subunit B3</fullName>
    </alternativeName>
</protein>